<dbReference type="EC" id="5.4.2.10" evidence="1"/>
<dbReference type="EMBL" id="CT971583">
    <property type="protein sequence ID" value="CAK22754.1"/>
    <property type="molecule type" value="Genomic_DNA"/>
</dbReference>
<dbReference type="SMR" id="A5GII9"/>
<dbReference type="STRING" id="32051.SynWH7803_0328"/>
<dbReference type="KEGG" id="syx:SynWH7803_0328"/>
<dbReference type="eggNOG" id="COG1109">
    <property type="taxonomic scope" value="Bacteria"/>
</dbReference>
<dbReference type="HOGENOM" id="CLU_016950_7_0_3"/>
<dbReference type="OrthoDB" id="9806956at2"/>
<dbReference type="Proteomes" id="UP000001566">
    <property type="component" value="Chromosome"/>
</dbReference>
<dbReference type="GO" id="GO:0005829">
    <property type="term" value="C:cytosol"/>
    <property type="evidence" value="ECO:0007669"/>
    <property type="project" value="TreeGrafter"/>
</dbReference>
<dbReference type="GO" id="GO:0000287">
    <property type="term" value="F:magnesium ion binding"/>
    <property type="evidence" value="ECO:0007669"/>
    <property type="project" value="UniProtKB-UniRule"/>
</dbReference>
<dbReference type="GO" id="GO:0008966">
    <property type="term" value="F:phosphoglucosamine mutase activity"/>
    <property type="evidence" value="ECO:0007669"/>
    <property type="project" value="UniProtKB-UniRule"/>
</dbReference>
<dbReference type="GO" id="GO:0004615">
    <property type="term" value="F:phosphomannomutase activity"/>
    <property type="evidence" value="ECO:0007669"/>
    <property type="project" value="TreeGrafter"/>
</dbReference>
<dbReference type="GO" id="GO:0005975">
    <property type="term" value="P:carbohydrate metabolic process"/>
    <property type="evidence" value="ECO:0007669"/>
    <property type="project" value="InterPro"/>
</dbReference>
<dbReference type="GO" id="GO:0009252">
    <property type="term" value="P:peptidoglycan biosynthetic process"/>
    <property type="evidence" value="ECO:0007669"/>
    <property type="project" value="TreeGrafter"/>
</dbReference>
<dbReference type="GO" id="GO:0006048">
    <property type="term" value="P:UDP-N-acetylglucosamine biosynthetic process"/>
    <property type="evidence" value="ECO:0007669"/>
    <property type="project" value="TreeGrafter"/>
</dbReference>
<dbReference type="CDD" id="cd05802">
    <property type="entry name" value="GlmM"/>
    <property type="match status" value="1"/>
</dbReference>
<dbReference type="FunFam" id="3.30.310.50:FF:000001">
    <property type="entry name" value="Phosphoglucosamine mutase"/>
    <property type="match status" value="1"/>
</dbReference>
<dbReference type="FunFam" id="3.40.120.10:FF:000002">
    <property type="entry name" value="Phosphoglucosamine mutase"/>
    <property type="match status" value="1"/>
</dbReference>
<dbReference type="Gene3D" id="3.40.120.10">
    <property type="entry name" value="Alpha-D-Glucose-1,6-Bisphosphate, subunit A, domain 3"/>
    <property type="match status" value="3"/>
</dbReference>
<dbReference type="Gene3D" id="3.30.310.50">
    <property type="entry name" value="Alpha-D-phosphohexomutase, C-terminal domain"/>
    <property type="match status" value="1"/>
</dbReference>
<dbReference type="HAMAP" id="MF_01554_B">
    <property type="entry name" value="GlmM_B"/>
    <property type="match status" value="1"/>
</dbReference>
<dbReference type="InterPro" id="IPR005844">
    <property type="entry name" value="A-D-PHexomutase_a/b/a-I"/>
</dbReference>
<dbReference type="InterPro" id="IPR016055">
    <property type="entry name" value="A-D-PHexomutase_a/b/a-I/II/III"/>
</dbReference>
<dbReference type="InterPro" id="IPR005845">
    <property type="entry name" value="A-D-PHexomutase_a/b/a-II"/>
</dbReference>
<dbReference type="InterPro" id="IPR005846">
    <property type="entry name" value="A-D-PHexomutase_a/b/a-III"/>
</dbReference>
<dbReference type="InterPro" id="IPR005843">
    <property type="entry name" value="A-D-PHexomutase_C"/>
</dbReference>
<dbReference type="InterPro" id="IPR036900">
    <property type="entry name" value="A-D-PHexomutase_C_sf"/>
</dbReference>
<dbReference type="InterPro" id="IPR016066">
    <property type="entry name" value="A-D-PHexomutase_CS"/>
</dbReference>
<dbReference type="InterPro" id="IPR005841">
    <property type="entry name" value="Alpha-D-phosphohexomutase_SF"/>
</dbReference>
<dbReference type="InterPro" id="IPR006352">
    <property type="entry name" value="GlmM_bact"/>
</dbReference>
<dbReference type="InterPro" id="IPR050060">
    <property type="entry name" value="Phosphoglucosamine_mutase"/>
</dbReference>
<dbReference type="NCBIfam" id="TIGR01455">
    <property type="entry name" value="glmM"/>
    <property type="match status" value="1"/>
</dbReference>
<dbReference type="PANTHER" id="PTHR42946:SF1">
    <property type="entry name" value="PHOSPHOGLUCOMUTASE (ALPHA-D-GLUCOSE-1,6-BISPHOSPHATE-DEPENDENT)"/>
    <property type="match status" value="1"/>
</dbReference>
<dbReference type="PANTHER" id="PTHR42946">
    <property type="entry name" value="PHOSPHOHEXOSE MUTASE"/>
    <property type="match status" value="1"/>
</dbReference>
<dbReference type="Pfam" id="PF02878">
    <property type="entry name" value="PGM_PMM_I"/>
    <property type="match status" value="1"/>
</dbReference>
<dbReference type="Pfam" id="PF02879">
    <property type="entry name" value="PGM_PMM_II"/>
    <property type="match status" value="1"/>
</dbReference>
<dbReference type="Pfam" id="PF02880">
    <property type="entry name" value="PGM_PMM_III"/>
    <property type="match status" value="1"/>
</dbReference>
<dbReference type="Pfam" id="PF00408">
    <property type="entry name" value="PGM_PMM_IV"/>
    <property type="match status" value="1"/>
</dbReference>
<dbReference type="PRINTS" id="PR00509">
    <property type="entry name" value="PGMPMM"/>
</dbReference>
<dbReference type="SUPFAM" id="SSF55957">
    <property type="entry name" value="Phosphoglucomutase, C-terminal domain"/>
    <property type="match status" value="1"/>
</dbReference>
<dbReference type="SUPFAM" id="SSF53738">
    <property type="entry name" value="Phosphoglucomutase, first 3 domains"/>
    <property type="match status" value="3"/>
</dbReference>
<dbReference type="PROSITE" id="PS00710">
    <property type="entry name" value="PGM_PMM"/>
    <property type="match status" value="1"/>
</dbReference>
<sequence>MASPAFHPLDCPDPAQVSFGTDGLRGHVGSAITSTLALQVGFWCGRVLPADGPVLIGMDSRTSGSMLVSALAAGLTAAGREVWTLGLCPTPAVPGLIRRFGAAGGLMVSASHNPPEDNGIKVFGADGSKLGSALQSRIEAGLRGEEPASAQAHAFGASHQRSDLLDLYKQDLLSSVRHQRLDGVPIVLDLCWGSATACGAAVFSELGADVTVLHGEADGERINVDCGSTHLEPLRRAVLERGAAMGFAFDGDADRMLAVDGRGRIVDGDHVLFLWGSALQDSGVLPDQRLVATVMSNLGFERAWQARGGQLDRTPVGDQHVHAAMVRSGAALGGEQSGHILSSAHGLSGDGVLTALQLASLCHGQGITLADWLDRSFEAYPQKLVNVRVPDRSRRKAWADCQSLTALVQEAERSMAGDGRVLVRASGTEPLLRVMVEAADPKAVEHWTQRLAEAADQHLNAA</sequence>
<protein>
    <recommendedName>
        <fullName evidence="1">Phosphoglucosamine mutase</fullName>
        <ecNumber evidence="1">5.4.2.10</ecNumber>
    </recommendedName>
</protein>
<reference key="1">
    <citation type="submission" date="2006-05" db="EMBL/GenBank/DDBJ databases">
        <authorList>
            <consortium name="Genoscope"/>
        </authorList>
    </citation>
    <scope>NUCLEOTIDE SEQUENCE [LARGE SCALE GENOMIC DNA]</scope>
    <source>
        <strain>WH7803</strain>
    </source>
</reference>
<accession>A5GII9</accession>
<gene>
    <name evidence="1" type="primary">glmM</name>
    <name type="ordered locus">SynWH7803_0328</name>
</gene>
<evidence type="ECO:0000255" key="1">
    <source>
        <dbReference type="HAMAP-Rule" id="MF_01554"/>
    </source>
</evidence>
<keyword id="KW-0413">Isomerase</keyword>
<keyword id="KW-0460">Magnesium</keyword>
<keyword id="KW-0479">Metal-binding</keyword>
<keyword id="KW-0597">Phosphoprotein</keyword>
<keyword id="KW-1185">Reference proteome</keyword>
<comment type="function">
    <text evidence="1">Catalyzes the conversion of glucosamine-6-phosphate to glucosamine-1-phosphate.</text>
</comment>
<comment type="catalytic activity">
    <reaction evidence="1">
        <text>alpha-D-glucosamine 1-phosphate = D-glucosamine 6-phosphate</text>
        <dbReference type="Rhea" id="RHEA:23424"/>
        <dbReference type="ChEBI" id="CHEBI:58516"/>
        <dbReference type="ChEBI" id="CHEBI:58725"/>
        <dbReference type="EC" id="5.4.2.10"/>
    </reaction>
</comment>
<comment type="cofactor">
    <cofactor evidence="1">
        <name>Mg(2+)</name>
        <dbReference type="ChEBI" id="CHEBI:18420"/>
    </cofactor>
    <text evidence="1">Binds 1 Mg(2+) ion per subunit.</text>
</comment>
<comment type="PTM">
    <text evidence="1">Activated by phosphorylation.</text>
</comment>
<comment type="similarity">
    <text evidence="1">Belongs to the phosphohexose mutase family.</text>
</comment>
<organism>
    <name type="scientific">Synechococcus sp. (strain WH7803)</name>
    <dbReference type="NCBI Taxonomy" id="32051"/>
    <lineage>
        <taxon>Bacteria</taxon>
        <taxon>Bacillati</taxon>
        <taxon>Cyanobacteriota</taxon>
        <taxon>Cyanophyceae</taxon>
        <taxon>Synechococcales</taxon>
        <taxon>Synechococcaceae</taxon>
        <taxon>Synechococcus</taxon>
    </lineage>
</organism>
<feature type="chain" id="PRO_0000305687" description="Phosphoglucosamine mutase">
    <location>
        <begin position="1"/>
        <end position="462"/>
    </location>
</feature>
<feature type="active site" description="Phosphoserine intermediate" evidence="1">
    <location>
        <position position="111"/>
    </location>
</feature>
<feature type="binding site" description="via phosphate group" evidence="1">
    <location>
        <position position="111"/>
    </location>
    <ligand>
        <name>Mg(2+)</name>
        <dbReference type="ChEBI" id="CHEBI:18420"/>
    </ligand>
</feature>
<feature type="binding site" evidence="1">
    <location>
        <position position="250"/>
    </location>
    <ligand>
        <name>Mg(2+)</name>
        <dbReference type="ChEBI" id="CHEBI:18420"/>
    </ligand>
</feature>
<feature type="binding site" evidence="1">
    <location>
        <position position="252"/>
    </location>
    <ligand>
        <name>Mg(2+)</name>
        <dbReference type="ChEBI" id="CHEBI:18420"/>
    </ligand>
</feature>
<feature type="binding site" evidence="1">
    <location>
        <position position="254"/>
    </location>
    <ligand>
        <name>Mg(2+)</name>
        <dbReference type="ChEBI" id="CHEBI:18420"/>
    </ligand>
</feature>
<feature type="modified residue" description="Phosphoserine" evidence="1">
    <location>
        <position position="111"/>
    </location>
</feature>
<name>GLMM_SYNPW</name>
<proteinExistence type="inferred from homology"/>